<comment type="function">
    <text evidence="1">Catalyzes two activities which are involved in the cyclic version of arginine biosynthesis: the synthesis of acetylglutamate from glutamate and acetyl-CoA, and of ornithine by transacetylation between acetylornithine and glutamate.</text>
</comment>
<comment type="catalytic activity">
    <reaction evidence="1">
        <text>N(2)-acetyl-L-ornithine + L-glutamate = N-acetyl-L-glutamate + L-ornithine</text>
        <dbReference type="Rhea" id="RHEA:15349"/>
        <dbReference type="ChEBI" id="CHEBI:29985"/>
        <dbReference type="ChEBI" id="CHEBI:44337"/>
        <dbReference type="ChEBI" id="CHEBI:46911"/>
        <dbReference type="ChEBI" id="CHEBI:57805"/>
        <dbReference type="EC" id="2.3.1.35"/>
    </reaction>
</comment>
<comment type="catalytic activity">
    <reaction evidence="1">
        <text>L-glutamate + acetyl-CoA = N-acetyl-L-glutamate + CoA + H(+)</text>
        <dbReference type="Rhea" id="RHEA:24292"/>
        <dbReference type="ChEBI" id="CHEBI:15378"/>
        <dbReference type="ChEBI" id="CHEBI:29985"/>
        <dbReference type="ChEBI" id="CHEBI:44337"/>
        <dbReference type="ChEBI" id="CHEBI:57287"/>
        <dbReference type="ChEBI" id="CHEBI:57288"/>
        <dbReference type="EC" id="2.3.1.1"/>
    </reaction>
</comment>
<comment type="pathway">
    <text evidence="1">Amino-acid biosynthesis; L-arginine biosynthesis; L-ornithine and N-acetyl-L-glutamate from L-glutamate and N(2)-acetyl-L-ornithine (cyclic): step 1/1.</text>
</comment>
<comment type="pathway">
    <text evidence="1">Amino-acid biosynthesis; L-arginine biosynthesis; N(2)-acetyl-L-ornithine from L-glutamate: step 1/4.</text>
</comment>
<comment type="subunit">
    <text evidence="1">Heterodimer of an alpha and a beta chain.</text>
</comment>
<comment type="subcellular location">
    <subcellularLocation>
        <location evidence="1">Plastid</location>
        <location evidence="1">Chloroplast</location>
    </subcellularLocation>
</comment>
<comment type="miscellaneous">
    <text evidence="1">This protein may be expected to contain an N-terminal transit peptide but none has been predicted.</text>
</comment>
<comment type="similarity">
    <text evidence="1">Belongs to the ArgJ family.</text>
</comment>
<feature type="chain" id="PRO_0000397992" description="Arginine biosynthesis bifunctional protein ArgJ alpha chain" evidence="1">
    <location>
        <begin position="1"/>
        <end position="259"/>
    </location>
</feature>
<feature type="chain" id="PRO_0000397993" description="Arginine biosynthesis bifunctional protein ArgJ beta chain" evidence="1">
    <location>
        <begin position="260"/>
        <end position="510"/>
    </location>
</feature>
<feature type="binding site" evidence="1">
    <location>
        <position position="223"/>
    </location>
    <ligand>
        <name>substrate</name>
    </ligand>
</feature>
<feature type="binding site" evidence="1">
    <location>
        <position position="249"/>
    </location>
    <ligand>
        <name>substrate</name>
    </ligand>
</feature>
<feature type="binding site" evidence="1">
    <location>
        <position position="359"/>
    </location>
    <ligand>
        <name>substrate</name>
    </ligand>
</feature>
<feature type="binding site" evidence="1">
    <location>
        <position position="505"/>
    </location>
    <ligand>
        <name>substrate</name>
    </ligand>
</feature>
<feature type="binding site" evidence="1">
    <location>
        <position position="510"/>
    </location>
    <ligand>
        <name>substrate</name>
    </ligand>
</feature>
<feature type="site" description="Involved in the stabilization of negative charge on the oxyanion by the formation of the oxyanion hole" evidence="1">
    <location>
        <position position="184"/>
    </location>
</feature>
<feature type="site" description="Involved in the stabilization of negative charge on the oxyanion by the formation of the oxyanion hole" evidence="1">
    <location>
        <position position="185"/>
    </location>
</feature>
<feature type="site" description="Cleavage; by autolysis" evidence="1">
    <location>
        <begin position="259"/>
        <end position="260"/>
    </location>
</feature>
<gene>
    <name type="ORF">VITISV_037692</name>
</gene>
<protein>
    <recommendedName>
        <fullName evidence="1">Arginine biosynthesis bifunctional protein ArgJ, chloroplastic</fullName>
    </recommendedName>
    <domain>
        <recommendedName>
            <fullName evidence="1">Glutamate N-acetyltransferase</fullName>
            <shortName evidence="1">GAT</shortName>
            <ecNumber evidence="1">2.3.1.35</ecNumber>
        </recommendedName>
        <alternativeName>
            <fullName evidence="1">Ornithine acetyltransferase</fullName>
            <shortName evidence="1">OATase</shortName>
        </alternativeName>
        <alternativeName>
            <fullName evidence="1">Ornithine transacetylase</fullName>
        </alternativeName>
    </domain>
    <domain>
        <recommendedName>
            <fullName evidence="1">Amino-acid acetyltransferase</fullName>
            <ecNumber evidence="1">2.3.1.1</ecNumber>
        </recommendedName>
        <alternativeName>
            <fullName evidence="1">N-acetylglutamate synthase</fullName>
            <shortName evidence="1">AGS</shortName>
        </alternativeName>
    </domain>
    <component>
        <recommendedName>
            <fullName evidence="1">Arginine biosynthesis bifunctional protein ArgJ alpha chain</fullName>
        </recommendedName>
    </component>
    <component>
        <recommendedName>
            <fullName evidence="1">Arginine biosynthesis bifunctional protein ArgJ beta chain</fullName>
        </recommendedName>
    </component>
</protein>
<keyword id="KW-0012">Acyltransferase</keyword>
<keyword id="KW-0028">Amino-acid biosynthesis</keyword>
<keyword id="KW-0055">Arginine biosynthesis</keyword>
<keyword id="KW-0068">Autocatalytic cleavage</keyword>
<keyword id="KW-0150">Chloroplast</keyword>
<keyword id="KW-0511">Multifunctional enzyme</keyword>
<keyword id="KW-0934">Plastid</keyword>
<keyword id="KW-0808">Transferase</keyword>
<name>ARGJ_VITVI</name>
<dbReference type="EC" id="2.3.1.35" evidence="1"/>
<dbReference type="EC" id="2.3.1.1" evidence="1"/>
<dbReference type="EMBL" id="AM424444">
    <property type="protein sequence ID" value="CAN77854.1"/>
    <property type="molecule type" value="Genomic_DNA"/>
</dbReference>
<dbReference type="SMR" id="A5AEC8"/>
<dbReference type="MEROPS" id="T05.002"/>
<dbReference type="UniPathway" id="UPA00068">
    <property type="reaction ID" value="UER00106"/>
</dbReference>
<dbReference type="UniPathway" id="UPA00068">
    <property type="reaction ID" value="UER00111"/>
</dbReference>
<dbReference type="ExpressionAtlas" id="A5AEC8">
    <property type="expression patterns" value="baseline and differential"/>
</dbReference>
<dbReference type="GO" id="GO:0009507">
    <property type="term" value="C:chloroplast"/>
    <property type="evidence" value="ECO:0007669"/>
    <property type="project" value="UniProtKB-SubCell"/>
</dbReference>
<dbReference type="GO" id="GO:0004358">
    <property type="term" value="F:glutamate N-acetyltransferase activity"/>
    <property type="evidence" value="ECO:0007669"/>
    <property type="project" value="UniProtKB-UniRule"/>
</dbReference>
<dbReference type="GO" id="GO:0004042">
    <property type="term" value="F:L-glutamate N-acetyltransferase activity"/>
    <property type="evidence" value="ECO:0007669"/>
    <property type="project" value="UniProtKB-UniRule"/>
</dbReference>
<dbReference type="GO" id="GO:0006526">
    <property type="term" value="P:L-arginine biosynthetic process"/>
    <property type="evidence" value="ECO:0007669"/>
    <property type="project" value="UniProtKB-UniRule"/>
</dbReference>
<dbReference type="CDD" id="cd02152">
    <property type="entry name" value="OAT"/>
    <property type="match status" value="1"/>
</dbReference>
<dbReference type="FunFam" id="3.60.70.12:FF:000001">
    <property type="entry name" value="Arginine biosynthesis bifunctional protein ArgJ, chloroplastic"/>
    <property type="match status" value="1"/>
</dbReference>
<dbReference type="Gene3D" id="3.30.2330.10">
    <property type="entry name" value="arginine biosynthesis bifunctional protein suprefamily"/>
    <property type="match status" value="1"/>
</dbReference>
<dbReference type="Gene3D" id="3.10.20.340">
    <property type="entry name" value="ArgJ beta chain, C-terminal domain"/>
    <property type="match status" value="1"/>
</dbReference>
<dbReference type="Gene3D" id="3.60.70.12">
    <property type="entry name" value="L-amino peptidase D-ALA esterase/amidase"/>
    <property type="match status" value="1"/>
</dbReference>
<dbReference type="HAMAP" id="MF_01106">
    <property type="entry name" value="ArgJ"/>
    <property type="match status" value="1"/>
</dbReference>
<dbReference type="InterPro" id="IPR002813">
    <property type="entry name" value="Arg_biosynth_ArgJ"/>
</dbReference>
<dbReference type="InterPro" id="IPR016117">
    <property type="entry name" value="ArgJ-like_dom_sf"/>
</dbReference>
<dbReference type="InterPro" id="IPR042195">
    <property type="entry name" value="ArgJ_beta_C"/>
</dbReference>
<dbReference type="PANTHER" id="PTHR23100">
    <property type="entry name" value="ARGININE BIOSYNTHESIS BIFUNCTIONAL PROTEIN ARGJ"/>
    <property type="match status" value="1"/>
</dbReference>
<dbReference type="PANTHER" id="PTHR23100:SF0">
    <property type="entry name" value="ARGININE BIOSYNTHESIS BIFUNCTIONAL PROTEIN ARGJ, MITOCHONDRIAL"/>
    <property type="match status" value="1"/>
</dbReference>
<dbReference type="Pfam" id="PF01960">
    <property type="entry name" value="ArgJ"/>
    <property type="match status" value="2"/>
</dbReference>
<dbReference type="SUPFAM" id="SSF56266">
    <property type="entry name" value="DmpA/ArgJ-like"/>
    <property type="match status" value="1"/>
</dbReference>
<proteinExistence type="inferred from homology"/>
<reference key="1">
    <citation type="journal article" date="2007" name="PLoS ONE">
        <title>A high quality draft consensus sequence of the genome of a heterozygous grapevine variety.</title>
        <authorList>
            <person name="Velasco R."/>
            <person name="Zharkikh A."/>
            <person name="Troggio M."/>
            <person name="Cartwright D.A."/>
            <person name="Cestaro A."/>
            <person name="Pruss D."/>
            <person name="Pindo M."/>
            <person name="FitzGerald L.M."/>
            <person name="Vezzulli S."/>
            <person name="Reid J."/>
            <person name="Malacarne G."/>
            <person name="Iliev D."/>
            <person name="Coppola G."/>
            <person name="Wardell B."/>
            <person name="Micheletti D."/>
            <person name="Macalma T."/>
            <person name="Facci M."/>
            <person name="Mitchell J.T."/>
            <person name="Perazzolli M."/>
            <person name="Eldredge G."/>
            <person name="Gatto P."/>
            <person name="Oyzerski R."/>
            <person name="Moretto M."/>
            <person name="Gutin N."/>
            <person name="Stefanini M."/>
            <person name="Chen Y."/>
            <person name="Segala C."/>
            <person name="Davenport C."/>
            <person name="Dematte L."/>
            <person name="Mraz A."/>
            <person name="Battilana J."/>
            <person name="Stormo K."/>
            <person name="Costa F."/>
            <person name="Tao Q."/>
            <person name="Si-Ammour A."/>
            <person name="Harkins T."/>
            <person name="Lackey A."/>
            <person name="Perbost C."/>
            <person name="Taillon B."/>
            <person name="Stella A."/>
            <person name="Solovyev V."/>
            <person name="Fawcett J.A."/>
            <person name="Sterck L."/>
            <person name="Vandepoele K."/>
            <person name="Grando S.M."/>
            <person name="Toppo S."/>
            <person name="Moser C."/>
            <person name="Lanchbury J."/>
            <person name="Bogden R."/>
            <person name="Skolnick M."/>
            <person name="Sgaramella V."/>
            <person name="Bhatnagar S.K."/>
            <person name="Fontana P."/>
            <person name="Gutin A."/>
            <person name="Van de Peer Y."/>
            <person name="Salamini F."/>
            <person name="Viola R."/>
        </authorList>
    </citation>
    <scope>NUCLEOTIDE SEQUENCE [LARGE SCALE GENOMIC DNA]</scope>
    <source>
        <strain>cv. Pinot noir</strain>
    </source>
</reference>
<evidence type="ECO:0000255" key="1">
    <source>
        <dbReference type="HAMAP-Rule" id="MF_03124"/>
    </source>
</evidence>
<organism>
    <name type="scientific">Vitis vinifera</name>
    <name type="common">Grape</name>
    <dbReference type="NCBI Taxonomy" id="29760"/>
    <lineage>
        <taxon>Eukaryota</taxon>
        <taxon>Viridiplantae</taxon>
        <taxon>Streptophyta</taxon>
        <taxon>Embryophyta</taxon>
        <taxon>Tracheophyta</taxon>
        <taxon>Spermatophyta</taxon>
        <taxon>Magnoliopsida</taxon>
        <taxon>eudicotyledons</taxon>
        <taxon>Gunneridae</taxon>
        <taxon>Pentapetalae</taxon>
        <taxon>rosids</taxon>
        <taxon>Vitales</taxon>
        <taxon>Vitaceae</taxon>
        <taxon>Viteae</taxon>
        <taxon>Vitis</taxon>
    </lineage>
</organism>
<accession>A5AEC8</accession>
<sequence length="510" mass="54114">MFLCVPHYTSITFPQLNDGRKVLRFGSYQRRGFRILAMSSSVSEASNYITAAPIFLPDGPWKQIPGGVTAAKGFKAAGLYGGLRAKGEKPDLALVACDVDAISAGAFTTNVVAAAPVVYCKNALDMSKTARAVLINAGQANAATAKRPSNDYQGDAGYQDVIECANALAKLLQMRPEEVLIESTGVIGHRIKKDALLNSLPKLVSSLSSSTEGADSAAVAITTTDLVSKSVAIESEVGGTNIRVGGMAKGSGMIHPNMATMLGVRLCFLHVLFCKVVTTDALVASDVWRKMVQIAVNRSFNQITVDGDTSTNDTVIALASGLSGSTRISSLISHEAIQLQACLDAVMQGLAKSIAWDGEGATCLIEGSSLVNAATIRIWRYRGHMAMPTGPLRIISLHLWYWAINHVELCFAAVYGRDPNWGRIACAAGYAGIPFQPNKLHISLGEILLMEGGQPLPFDRAAASNYLKKAGETHGTVGIHISIGDGAGRGQAWGCDLSYDYVKINAEYTT</sequence>